<sequence>MVTTSQEQGHDALTATSAVTGLPQKRFYRQRAHSNPIADHSFDYPARPEDVDWSALYPNIQPDQQVEFADIGCGYGGFLVTLGEMFPQKLSIGMEIRVKVSDYVVDRIAALRLKSGKLNGDAYKNIACIRTNAMKYLPNYFRKGQLEKMFFLYPDPHFKRAKHKWRIINQALLSEYAYVLRQGGLVYTMTDVEDLHQWIVSHMNQHPLYERISPEDESQDPITPKLYQSSEEGAKVVRNKGDHFLAIFRRI</sequence>
<gene>
    <name type="ORF">GK16167</name>
</gene>
<name>TRMB_DROWI</name>
<evidence type="ECO:0000255" key="1">
    <source>
        <dbReference type="HAMAP-Rule" id="MF_03055"/>
    </source>
</evidence>
<comment type="function">
    <text evidence="1">Catalyzes the formation of N(7)-methylguanine at position 46 (m7G46) in tRNA.</text>
</comment>
<comment type="catalytic activity">
    <reaction evidence="1">
        <text>guanosine(46) in tRNA + S-adenosyl-L-methionine = N(7)-methylguanosine(46) in tRNA + S-adenosyl-L-homocysteine</text>
        <dbReference type="Rhea" id="RHEA:42708"/>
        <dbReference type="Rhea" id="RHEA-COMP:10188"/>
        <dbReference type="Rhea" id="RHEA-COMP:10189"/>
        <dbReference type="ChEBI" id="CHEBI:57856"/>
        <dbReference type="ChEBI" id="CHEBI:59789"/>
        <dbReference type="ChEBI" id="CHEBI:74269"/>
        <dbReference type="ChEBI" id="CHEBI:74480"/>
        <dbReference type="EC" id="2.1.1.33"/>
    </reaction>
</comment>
<comment type="pathway">
    <text evidence="1">tRNA modification; N(7)-methylguanine-tRNA biosynthesis.</text>
</comment>
<comment type="subcellular location">
    <subcellularLocation>
        <location evidence="1">Nucleus</location>
    </subcellularLocation>
</comment>
<comment type="similarity">
    <text evidence="1">Belongs to the class I-like SAM-binding methyltransferase superfamily. TrmB family.</text>
</comment>
<accession>B4N278</accession>
<keyword id="KW-0489">Methyltransferase</keyword>
<keyword id="KW-0539">Nucleus</keyword>
<keyword id="KW-1185">Reference proteome</keyword>
<keyword id="KW-0694">RNA-binding</keyword>
<keyword id="KW-0949">S-adenosyl-L-methionine</keyword>
<keyword id="KW-0808">Transferase</keyword>
<keyword id="KW-0819">tRNA processing</keyword>
<keyword id="KW-0820">tRNA-binding</keyword>
<organism>
    <name type="scientific">Drosophila willistoni</name>
    <name type="common">Fruit fly</name>
    <dbReference type="NCBI Taxonomy" id="7260"/>
    <lineage>
        <taxon>Eukaryota</taxon>
        <taxon>Metazoa</taxon>
        <taxon>Ecdysozoa</taxon>
        <taxon>Arthropoda</taxon>
        <taxon>Hexapoda</taxon>
        <taxon>Insecta</taxon>
        <taxon>Pterygota</taxon>
        <taxon>Neoptera</taxon>
        <taxon>Endopterygota</taxon>
        <taxon>Diptera</taxon>
        <taxon>Brachycera</taxon>
        <taxon>Muscomorpha</taxon>
        <taxon>Ephydroidea</taxon>
        <taxon>Drosophilidae</taxon>
        <taxon>Drosophila</taxon>
        <taxon>Sophophora</taxon>
    </lineage>
</organism>
<protein>
    <recommendedName>
        <fullName evidence="1">tRNA (guanine-N(7)-)-methyltransferase</fullName>
        <ecNumber evidence="1">2.1.1.33</ecNumber>
    </recommendedName>
    <alternativeName>
        <fullName evidence="1">tRNA (guanine(46)-N(7))-methyltransferase</fullName>
    </alternativeName>
    <alternativeName>
        <fullName evidence="1">tRNA(m7G46)-methyltransferase</fullName>
    </alternativeName>
</protein>
<dbReference type="EC" id="2.1.1.33" evidence="1"/>
<dbReference type="EMBL" id="CH963925">
    <property type="protein sequence ID" value="EDW78467.1"/>
    <property type="molecule type" value="Genomic_DNA"/>
</dbReference>
<dbReference type="SMR" id="B4N278"/>
<dbReference type="STRING" id="7260.B4N278"/>
<dbReference type="EnsemblMetazoa" id="FBtr0246818">
    <property type="protein sequence ID" value="FBpp0245310"/>
    <property type="gene ID" value="FBgn0218169"/>
</dbReference>
<dbReference type="EnsemblMetazoa" id="XM_002067445.4">
    <property type="protein sequence ID" value="XP_002067481.1"/>
    <property type="gene ID" value="LOC6644754"/>
</dbReference>
<dbReference type="GeneID" id="6644754"/>
<dbReference type="KEGG" id="dwi:6644754"/>
<dbReference type="eggNOG" id="KOG3115">
    <property type="taxonomic scope" value="Eukaryota"/>
</dbReference>
<dbReference type="HOGENOM" id="CLU_050910_3_0_1"/>
<dbReference type="OMA" id="LPNYFAK"/>
<dbReference type="OrthoDB" id="47276at2759"/>
<dbReference type="PhylomeDB" id="B4N278"/>
<dbReference type="UniPathway" id="UPA00989"/>
<dbReference type="Proteomes" id="UP000007798">
    <property type="component" value="Unassembled WGS sequence"/>
</dbReference>
<dbReference type="GO" id="GO:0005634">
    <property type="term" value="C:nucleus"/>
    <property type="evidence" value="ECO:0007669"/>
    <property type="project" value="UniProtKB-SubCell"/>
</dbReference>
<dbReference type="GO" id="GO:0043527">
    <property type="term" value="C:tRNA methyltransferase complex"/>
    <property type="evidence" value="ECO:0007669"/>
    <property type="project" value="TreeGrafter"/>
</dbReference>
<dbReference type="GO" id="GO:0008176">
    <property type="term" value="F:tRNA (guanine(46)-N7)-methyltransferase activity"/>
    <property type="evidence" value="ECO:0007669"/>
    <property type="project" value="UniProtKB-UniRule"/>
</dbReference>
<dbReference type="GO" id="GO:0000049">
    <property type="term" value="F:tRNA binding"/>
    <property type="evidence" value="ECO:0007669"/>
    <property type="project" value="UniProtKB-UniRule"/>
</dbReference>
<dbReference type="FunFam" id="3.40.50.150:FF:000060">
    <property type="entry name" value="tRNA (guanine-N(7)-)-methyltransferase"/>
    <property type="match status" value="1"/>
</dbReference>
<dbReference type="Gene3D" id="3.40.50.150">
    <property type="entry name" value="Vaccinia Virus protein VP39"/>
    <property type="match status" value="1"/>
</dbReference>
<dbReference type="HAMAP" id="MF_03055">
    <property type="entry name" value="tRNA_methyltr_TrmB_euk"/>
    <property type="match status" value="1"/>
</dbReference>
<dbReference type="InterPro" id="IPR029063">
    <property type="entry name" value="SAM-dependent_MTases_sf"/>
</dbReference>
<dbReference type="InterPro" id="IPR025763">
    <property type="entry name" value="Trm8_euk"/>
</dbReference>
<dbReference type="InterPro" id="IPR003358">
    <property type="entry name" value="tRNA_(Gua-N-7)_MeTrfase_Trmb"/>
</dbReference>
<dbReference type="NCBIfam" id="TIGR00091">
    <property type="entry name" value="tRNA (guanosine(46)-N7)-methyltransferase TrmB"/>
    <property type="match status" value="1"/>
</dbReference>
<dbReference type="PANTHER" id="PTHR23417">
    <property type="entry name" value="3-DEOXY-D-MANNO-OCTULOSONIC-ACID TRANSFERASE/TRNA GUANINE-N 7 - -METHYLTRANSFERASE"/>
    <property type="match status" value="1"/>
</dbReference>
<dbReference type="PANTHER" id="PTHR23417:SF16">
    <property type="entry name" value="TRNA (GUANINE-N(7)-)-METHYLTRANSFERASE"/>
    <property type="match status" value="1"/>
</dbReference>
<dbReference type="Pfam" id="PF02390">
    <property type="entry name" value="Methyltransf_4"/>
    <property type="match status" value="1"/>
</dbReference>
<dbReference type="SUPFAM" id="SSF53335">
    <property type="entry name" value="S-adenosyl-L-methionine-dependent methyltransferases"/>
    <property type="match status" value="1"/>
</dbReference>
<dbReference type="PROSITE" id="PS51625">
    <property type="entry name" value="SAM_MT_TRMB"/>
    <property type="match status" value="1"/>
</dbReference>
<reference key="1">
    <citation type="journal article" date="2007" name="Nature">
        <title>Evolution of genes and genomes on the Drosophila phylogeny.</title>
        <authorList>
            <consortium name="Drosophila 12 genomes consortium"/>
        </authorList>
    </citation>
    <scope>NUCLEOTIDE SEQUENCE [LARGE SCALE GENOMIC DNA]</scope>
    <source>
        <strain>Tucson 14030-0811.24</strain>
    </source>
</reference>
<feature type="chain" id="PRO_0000370577" description="tRNA (guanine-N(7)-)-methyltransferase">
    <location>
        <begin position="1"/>
        <end position="251"/>
    </location>
</feature>
<feature type="active site" evidence="1">
    <location>
        <position position="155"/>
    </location>
</feature>
<feature type="binding site" evidence="1">
    <location>
        <position position="72"/>
    </location>
    <ligand>
        <name>S-adenosyl-L-methionine</name>
        <dbReference type="ChEBI" id="CHEBI:59789"/>
    </ligand>
</feature>
<feature type="binding site" evidence="1">
    <location>
        <begin position="95"/>
        <end position="96"/>
    </location>
    <ligand>
        <name>S-adenosyl-L-methionine</name>
        <dbReference type="ChEBI" id="CHEBI:59789"/>
    </ligand>
</feature>
<feature type="binding site" evidence="1">
    <location>
        <begin position="132"/>
        <end position="133"/>
    </location>
    <ligand>
        <name>S-adenosyl-L-methionine</name>
        <dbReference type="ChEBI" id="CHEBI:59789"/>
    </ligand>
</feature>
<feature type="binding site" evidence="1">
    <location>
        <position position="152"/>
    </location>
    <ligand>
        <name>S-adenosyl-L-methionine</name>
        <dbReference type="ChEBI" id="CHEBI:59789"/>
    </ligand>
</feature>
<feature type="binding site" evidence="1">
    <location>
        <begin position="230"/>
        <end position="232"/>
    </location>
    <ligand>
        <name>S-adenosyl-L-methionine</name>
        <dbReference type="ChEBI" id="CHEBI:59789"/>
    </ligand>
</feature>
<proteinExistence type="inferred from homology"/>